<comment type="function">
    <text evidence="1">Cell wall formation.</text>
</comment>
<comment type="catalytic activity">
    <reaction evidence="1">
        <text>UDP-N-acetyl-alpha-D-muramate + NADP(+) = UDP-N-acetyl-3-O-(1-carboxyvinyl)-alpha-D-glucosamine + NADPH + H(+)</text>
        <dbReference type="Rhea" id="RHEA:12248"/>
        <dbReference type="ChEBI" id="CHEBI:15378"/>
        <dbReference type="ChEBI" id="CHEBI:57783"/>
        <dbReference type="ChEBI" id="CHEBI:58349"/>
        <dbReference type="ChEBI" id="CHEBI:68483"/>
        <dbReference type="ChEBI" id="CHEBI:70757"/>
        <dbReference type="EC" id="1.3.1.98"/>
    </reaction>
</comment>
<comment type="cofactor">
    <cofactor evidence="1">
        <name>FAD</name>
        <dbReference type="ChEBI" id="CHEBI:57692"/>
    </cofactor>
</comment>
<comment type="pathway">
    <text evidence="1">Cell wall biogenesis; peptidoglycan biosynthesis.</text>
</comment>
<comment type="subcellular location">
    <subcellularLocation>
        <location evidence="1">Cytoplasm</location>
    </subcellularLocation>
</comment>
<comment type="similarity">
    <text evidence="1">Belongs to the MurB family.</text>
</comment>
<accession>B7GGI1</accession>
<organism>
    <name type="scientific">Anoxybacillus flavithermus (strain DSM 21510 / WK1)</name>
    <dbReference type="NCBI Taxonomy" id="491915"/>
    <lineage>
        <taxon>Bacteria</taxon>
        <taxon>Bacillati</taxon>
        <taxon>Bacillota</taxon>
        <taxon>Bacilli</taxon>
        <taxon>Bacillales</taxon>
        <taxon>Anoxybacillaceae</taxon>
        <taxon>Anoxybacillus</taxon>
    </lineage>
</organism>
<sequence length="302" mass="33088">MEKLREELLQANVGTVKENERMASHTTIKIGGPADLFVEPKHIDGLKKTMEIVRKYNVPWRAIGRGSNLLVRDGGIEGVVIKLGEGLDDLYIHDTEVTVGGGYSLIKLATVISKQGLSGLEFAGGIPGTVGGAVYMNAGAHGSDMSRIVKKAQILFEDGTIEWLTNEEMEFSYRTSVLQKKRKGICIAATLEMKKGNHDEIVAAMQKNKDYRRETQPWNYPCAGSIFRNPLPQYAGQLIEQAGLKGYTIGGAKISEQHANFIVNAGGATANDVLELIDYVKKTIYDLYGVSLQTEVEIVGRK</sequence>
<keyword id="KW-0131">Cell cycle</keyword>
<keyword id="KW-0132">Cell division</keyword>
<keyword id="KW-0133">Cell shape</keyword>
<keyword id="KW-0961">Cell wall biogenesis/degradation</keyword>
<keyword id="KW-0963">Cytoplasm</keyword>
<keyword id="KW-0274">FAD</keyword>
<keyword id="KW-0285">Flavoprotein</keyword>
<keyword id="KW-0521">NADP</keyword>
<keyword id="KW-0560">Oxidoreductase</keyword>
<keyword id="KW-0573">Peptidoglycan synthesis</keyword>
<proteinExistence type="inferred from homology"/>
<feature type="chain" id="PRO_1000191398" description="UDP-N-acetylenolpyruvoylglucosamine reductase">
    <location>
        <begin position="1"/>
        <end position="302"/>
    </location>
</feature>
<feature type="domain" description="FAD-binding PCMH-type" evidence="1">
    <location>
        <begin position="30"/>
        <end position="196"/>
    </location>
</feature>
<feature type="active site" evidence="1">
    <location>
        <position position="174"/>
    </location>
</feature>
<feature type="active site" description="Proton donor" evidence="1">
    <location>
        <position position="225"/>
    </location>
</feature>
<feature type="active site" evidence="1">
    <location>
        <position position="295"/>
    </location>
</feature>
<evidence type="ECO:0000255" key="1">
    <source>
        <dbReference type="HAMAP-Rule" id="MF_00037"/>
    </source>
</evidence>
<gene>
    <name evidence="1" type="primary">murB</name>
    <name type="ordered locus">Aflv_1829</name>
</gene>
<name>MURB_ANOFW</name>
<dbReference type="EC" id="1.3.1.98" evidence="1"/>
<dbReference type="EMBL" id="CP000922">
    <property type="protein sequence ID" value="ACJ34190.1"/>
    <property type="molecule type" value="Genomic_DNA"/>
</dbReference>
<dbReference type="RefSeq" id="WP_012575388.1">
    <property type="nucleotide sequence ID" value="NC_011567.1"/>
</dbReference>
<dbReference type="SMR" id="B7GGI1"/>
<dbReference type="STRING" id="491915.Aflv_1829"/>
<dbReference type="GeneID" id="7038082"/>
<dbReference type="KEGG" id="afl:Aflv_1829"/>
<dbReference type="PATRIC" id="fig|491915.6.peg.1881"/>
<dbReference type="eggNOG" id="COG0812">
    <property type="taxonomic scope" value="Bacteria"/>
</dbReference>
<dbReference type="HOGENOM" id="CLU_035304_1_1_9"/>
<dbReference type="UniPathway" id="UPA00219"/>
<dbReference type="Proteomes" id="UP000000742">
    <property type="component" value="Chromosome"/>
</dbReference>
<dbReference type="GO" id="GO:0005829">
    <property type="term" value="C:cytosol"/>
    <property type="evidence" value="ECO:0007669"/>
    <property type="project" value="TreeGrafter"/>
</dbReference>
<dbReference type="GO" id="GO:0071949">
    <property type="term" value="F:FAD binding"/>
    <property type="evidence" value="ECO:0007669"/>
    <property type="project" value="InterPro"/>
</dbReference>
<dbReference type="GO" id="GO:0008762">
    <property type="term" value="F:UDP-N-acetylmuramate dehydrogenase activity"/>
    <property type="evidence" value="ECO:0007669"/>
    <property type="project" value="UniProtKB-UniRule"/>
</dbReference>
<dbReference type="GO" id="GO:0051301">
    <property type="term" value="P:cell division"/>
    <property type="evidence" value="ECO:0007669"/>
    <property type="project" value="UniProtKB-KW"/>
</dbReference>
<dbReference type="GO" id="GO:0071555">
    <property type="term" value="P:cell wall organization"/>
    <property type="evidence" value="ECO:0007669"/>
    <property type="project" value="UniProtKB-KW"/>
</dbReference>
<dbReference type="GO" id="GO:0009252">
    <property type="term" value="P:peptidoglycan biosynthetic process"/>
    <property type="evidence" value="ECO:0007669"/>
    <property type="project" value="UniProtKB-UniRule"/>
</dbReference>
<dbReference type="GO" id="GO:0008360">
    <property type="term" value="P:regulation of cell shape"/>
    <property type="evidence" value="ECO:0007669"/>
    <property type="project" value="UniProtKB-KW"/>
</dbReference>
<dbReference type="Gene3D" id="3.30.465.10">
    <property type="match status" value="1"/>
</dbReference>
<dbReference type="Gene3D" id="3.90.78.10">
    <property type="entry name" value="UDP-N-acetylenolpyruvoylglucosamine reductase, C-terminal domain"/>
    <property type="match status" value="1"/>
</dbReference>
<dbReference type="Gene3D" id="3.30.43.10">
    <property type="entry name" value="Uridine Diphospho-n-acetylenolpyruvylglucosamine Reductase, domain 2"/>
    <property type="match status" value="1"/>
</dbReference>
<dbReference type="HAMAP" id="MF_00037">
    <property type="entry name" value="MurB"/>
    <property type="match status" value="1"/>
</dbReference>
<dbReference type="InterPro" id="IPR016166">
    <property type="entry name" value="FAD-bd_PCMH"/>
</dbReference>
<dbReference type="InterPro" id="IPR036318">
    <property type="entry name" value="FAD-bd_PCMH-like_sf"/>
</dbReference>
<dbReference type="InterPro" id="IPR016167">
    <property type="entry name" value="FAD-bd_PCMH_sub1"/>
</dbReference>
<dbReference type="InterPro" id="IPR016169">
    <property type="entry name" value="FAD-bd_PCMH_sub2"/>
</dbReference>
<dbReference type="InterPro" id="IPR003170">
    <property type="entry name" value="MurB"/>
</dbReference>
<dbReference type="InterPro" id="IPR011601">
    <property type="entry name" value="MurB_C"/>
</dbReference>
<dbReference type="InterPro" id="IPR036635">
    <property type="entry name" value="MurB_C_sf"/>
</dbReference>
<dbReference type="InterPro" id="IPR006094">
    <property type="entry name" value="Oxid_FAD_bind_N"/>
</dbReference>
<dbReference type="NCBIfam" id="TIGR00179">
    <property type="entry name" value="murB"/>
    <property type="match status" value="1"/>
</dbReference>
<dbReference type="NCBIfam" id="NF010480">
    <property type="entry name" value="PRK13905.1"/>
    <property type="match status" value="1"/>
</dbReference>
<dbReference type="PANTHER" id="PTHR21071">
    <property type="entry name" value="UDP-N-ACETYLENOLPYRUVOYLGLUCOSAMINE REDUCTASE"/>
    <property type="match status" value="1"/>
</dbReference>
<dbReference type="PANTHER" id="PTHR21071:SF5">
    <property type="entry name" value="UDP-N-ACETYLENOLPYRUVOYLGLUCOSAMINE REDUCTASE"/>
    <property type="match status" value="1"/>
</dbReference>
<dbReference type="Pfam" id="PF01565">
    <property type="entry name" value="FAD_binding_4"/>
    <property type="match status" value="1"/>
</dbReference>
<dbReference type="Pfam" id="PF02873">
    <property type="entry name" value="MurB_C"/>
    <property type="match status" value="1"/>
</dbReference>
<dbReference type="SUPFAM" id="SSF56176">
    <property type="entry name" value="FAD-binding/transporter-associated domain-like"/>
    <property type="match status" value="1"/>
</dbReference>
<dbReference type="SUPFAM" id="SSF56194">
    <property type="entry name" value="Uridine diphospho-N-Acetylenolpyruvylglucosamine reductase, MurB, C-terminal domain"/>
    <property type="match status" value="1"/>
</dbReference>
<dbReference type="PROSITE" id="PS51387">
    <property type="entry name" value="FAD_PCMH"/>
    <property type="match status" value="1"/>
</dbReference>
<protein>
    <recommendedName>
        <fullName evidence="1">UDP-N-acetylenolpyruvoylglucosamine reductase</fullName>
        <ecNumber evidence="1">1.3.1.98</ecNumber>
    </recommendedName>
    <alternativeName>
        <fullName evidence="1">UDP-N-acetylmuramate dehydrogenase</fullName>
    </alternativeName>
</protein>
<reference key="1">
    <citation type="journal article" date="2008" name="Genome Biol.">
        <title>Encapsulated in silica: genome, proteome and physiology of the thermophilic bacterium Anoxybacillus flavithermus WK1.</title>
        <authorList>
            <person name="Saw J.H."/>
            <person name="Mountain B.W."/>
            <person name="Feng L."/>
            <person name="Omelchenko M.V."/>
            <person name="Hou S."/>
            <person name="Saito J.A."/>
            <person name="Stott M.B."/>
            <person name="Li D."/>
            <person name="Zhao G."/>
            <person name="Wu J."/>
            <person name="Galperin M.Y."/>
            <person name="Koonin E.V."/>
            <person name="Makarova K.S."/>
            <person name="Wolf Y.I."/>
            <person name="Rigden D.J."/>
            <person name="Dunfield P.F."/>
            <person name="Wang L."/>
            <person name="Alam M."/>
        </authorList>
    </citation>
    <scope>NUCLEOTIDE SEQUENCE [LARGE SCALE GENOMIC DNA]</scope>
    <source>
        <strain>DSM 21510 / WK1</strain>
    </source>
</reference>